<sequence>MDLTVTHITHKETYKEPRDDDDDKQVVAEIMARSFIPTLITTIPWEGFHFAGHEIQITEGKDCYGAFVWPSALVLCYFLETHAKQYNMVDKNVIEIGAGTGLVSIVASLLGARVIATDLPELLGNLQYNISRNTKMKCKHLPQVKELSWGVALDRNFPRSSNNFDYILAADVVYAHPFLEELLMTFDHLCKETTIILWAMRFRLEKENKFVDKFKELFDLEEISSFPSLNIKLYKAMKKNRRSA</sequence>
<accession>Q8CDZ2</accession>
<gene>
    <name type="primary">Mettl21e</name>
</gene>
<feature type="chain" id="PRO_0000329292" description="Protein-lysine methyltransferase METTL21E">
    <location>
        <begin position="1"/>
        <end position="244"/>
    </location>
</feature>
<feature type="region of interest" description="Disordered" evidence="2">
    <location>
        <begin position="1"/>
        <end position="20"/>
    </location>
</feature>
<feature type="compositionally biased region" description="Basic and acidic residues" evidence="2">
    <location>
        <begin position="9"/>
        <end position="18"/>
    </location>
</feature>
<feature type="binding site" evidence="1">
    <location>
        <position position="69"/>
    </location>
    <ligand>
        <name>S-adenosyl-L-methionine</name>
        <dbReference type="ChEBI" id="CHEBI:59789"/>
    </ligand>
</feature>
<feature type="binding site" evidence="1">
    <location>
        <begin position="97"/>
        <end position="99"/>
    </location>
    <ligand>
        <name>S-adenosyl-L-methionine</name>
        <dbReference type="ChEBI" id="CHEBI:59789"/>
    </ligand>
</feature>
<feature type="binding site" evidence="1">
    <location>
        <position position="118"/>
    </location>
    <ligand>
        <name>S-adenosyl-L-methionine</name>
        <dbReference type="ChEBI" id="CHEBI:59789"/>
    </ligand>
</feature>
<feature type="binding site" evidence="1">
    <location>
        <position position="149"/>
    </location>
    <ligand>
        <name>S-adenosyl-L-methionine</name>
        <dbReference type="ChEBI" id="CHEBI:59789"/>
    </ligand>
</feature>
<feature type="binding site" evidence="1">
    <location>
        <position position="170"/>
    </location>
    <ligand>
        <name>S-adenosyl-L-methionine</name>
        <dbReference type="ChEBI" id="CHEBI:59789"/>
    </ligand>
</feature>
<dbReference type="EC" id="2.1.1.-"/>
<dbReference type="EMBL" id="AK029331">
    <property type="protein sequence ID" value="BAC26399.1"/>
    <property type="molecule type" value="mRNA"/>
</dbReference>
<dbReference type="EMBL" id="BC100531">
    <property type="protein sequence ID" value="AAI00532.1"/>
    <property type="molecule type" value="mRNA"/>
</dbReference>
<dbReference type="CCDS" id="CCDS14931.1"/>
<dbReference type="RefSeq" id="NP_997164.1">
    <property type="nucleotide sequence ID" value="NM_207281.3"/>
</dbReference>
<dbReference type="SMR" id="Q8CDZ2"/>
<dbReference type="BioGRID" id="240076">
    <property type="interactions" value="260"/>
</dbReference>
<dbReference type="FunCoup" id="Q8CDZ2">
    <property type="interactions" value="475"/>
</dbReference>
<dbReference type="STRING" id="10090.ENSMUSP00000056481"/>
<dbReference type="PaxDb" id="10090-ENSMUSP00000056481"/>
<dbReference type="ProteomicsDB" id="291427"/>
<dbReference type="DNASU" id="403183"/>
<dbReference type="Ensembl" id="ENSMUST00000054801.4">
    <property type="protein sequence ID" value="ENSMUSP00000056481.4"/>
    <property type="gene ID" value="ENSMUSG00000046828.4"/>
</dbReference>
<dbReference type="GeneID" id="403183"/>
<dbReference type="KEGG" id="mmu:403183"/>
<dbReference type="UCSC" id="uc007awk.1">
    <property type="organism name" value="mouse"/>
</dbReference>
<dbReference type="AGR" id="MGI:2685837"/>
<dbReference type="CTD" id="403183"/>
<dbReference type="MGI" id="MGI:2685837">
    <property type="gene designation" value="Mettl21e"/>
</dbReference>
<dbReference type="VEuPathDB" id="HostDB:ENSMUSG00000046828"/>
<dbReference type="eggNOG" id="KOG2793">
    <property type="taxonomic scope" value="Eukaryota"/>
</dbReference>
<dbReference type="GeneTree" id="ENSGT00940000159229"/>
<dbReference type="HOGENOM" id="CLU_055721_0_0_1"/>
<dbReference type="InParanoid" id="Q8CDZ2"/>
<dbReference type="OMA" id="WEGYIFS"/>
<dbReference type="OrthoDB" id="413520at2759"/>
<dbReference type="PhylomeDB" id="Q8CDZ2"/>
<dbReference type="TreeFam" id="TF354267"/>
<dbReference type="BioGRID-ORCS" id="403183">
    <property type="hits" value="4 hits in 77 CRISPR screens"/>
</dbReference>
<dbReference type="ChiTaRS" id="Mettl21e">
    <property type="organism name" value="mouse"/>
</dbReference>
<dbReference type="PRO" id="PR:Q8CDZ2"/>
<dbReference type="Proteomes" id="UP000000589">
    <property type="component" value="Chromosome 1"/>
</dbReference>
<dbReference type="RNAct" id="Q8CDZ2">
    <property type="molecule type" value="protein"/>
</dbReference>
<dbReference type="Bgee" id="ENSMUSG00000046828">
    <property type="expression patterns" value="Expressed in knee joint and 35 other cell types or tissues"/>
</dbReference>
<dbReference type="GO" id="GO:0008276">
    <property type="term" value="F:protein methyltransferase activity"/>
    <property type="evidence" value="ECO:0007669"/>
    <property type="project" value="UniProtKB-ARBA"/>
</dbReference>
<dbReference type="GO" id="GO:0032259">
    <property type="term" value="P:methylation"/>
    <property type="evidence" value="ECO:0007669"/>
    <property type="project" value="UniProtKB-KW"/>
</dbReference>
<dbReference type="CDD" id="cd02440">
    <property type="entry name" value="AdoMet_MTases"/>
    <property type="match status" value="1"/>
</dbReference>
<dbReference type="Gene3D" id="3.40.50.150">
    <property type="entry name" value="Vaccinia Virus protein VP39"/>
    <property type="match status" value="1"/>
</dbReference>
<dbReference type="InterPro" id="IPR019410">
    <property type="entry name" value="Methyltransf_16"/>
</dbReference>
<dbReference type="InterPro" id="IPR029063">
    <property type="entry name" value="SAM-dependent_MTases_sf"/>
</dbReference>
<dbReference type="PANTHER" id="PTHR14614">
    <property type="entry name" value="HEPATOCELLULAR CARCINOMA-ASSOCIATED ANTIGEN"/>
    <property type="match status" value="1"/>
</dbReference>
<dbReference type="PANTHER" id="PTHR14614:SF1">
    <property type="entry name" value="METHYLTRANSFERASE-LIKE PROTEIN 21E PSEUDOGENE-RELATED"/>
    <property type="match status" value="1"/>
</dbReference>
<dbReference type="Pfam" id="PF10294">
    <property type="entry name" value="Methyltransf_16"/>
    <property type="match status" value="1"/>
</dbReference>
<dbReference type="SUPFAM" id="SSF53335">
    <property type="entry name" value="S-adenosyl-L-methionine-dependent methyltransferases"/>
    <property type="match status" value="1"/>
</dbReference>
<keyword id="KW-0489">Methyltransferase</keyword>
<keyword id="KW-1185">Reference proteome</keyword>
<keyword id="KW-0949">S-adenosyl-L-methionine</keyword>
<keyword id="KW-0808">Transferase</keyword>
<organism>
    <name type="scientific">Mus musculus</name>
    <name type="common">Mouse</name>
    <dbReference type="NCBI Taxonomy" id="10090"/>
    <lineage>
        <taxon>Eukaryota</taxon>
        <taxon>Metazoa</taxon>
        <taxon>Chordata</taxon>
        <taxon>Craniata</taxon>
        <taxon>Vertebrata</taxon>
        <taxon>Euteleostomi</taxon>
        <taxon>Mammalia</taxon>
        <taxon>Eutheria</taxon>
        <taxon>Euarchontoglires</taxon>
        <taxon>Glires</taxon>
        <taxon>Rodentia</taxon>
        <taxon>Myomorpha</taxon>
        <taxon>Muroidea</taxon>
        <taxon>Muridae</taxon>
        <taxon>Murinae</taxon>
        <taxon>Mus</taxon>
        <taxon>Mus</taxon>
    </lineage>
</organism>
<evidence type="ECO:0000250" key="1"/>
<evidence type="ECO:0000256" key="2">
    <source>
        <dbReference type="SAM" id="MobiDB-lite"/>
    </source>
</evidence>
<evidence type="ECO:0000305" key="3"/>
<proteinExistence type="evidence at transcript level"/>
<name>MT21E_MOUSE</name>
<reference key="1">
    <citation type="journal article" date="2005" name="Science">
        <title>The transcriptional landscape of the mammalian genome.</title>
        <authorList>
            <person name="Carninci P."/>
            <person name="Kasukawa T."/>
            <person name="Katayama S."/>
            <person name="Gough J."/>
            <person name="Frith M.C."/>
            <person name="Maeda N."/>
            <person name="Oyama R."/>
            <person name="Ravasi T."/>
            <person name="Lenhard B."/>
            <person name="Wells C."/>
            <person name="Kodzius R."/>
            <person name="Shimokawa K."/>
            <person name="Bajic V.B."/>
            <person name="Brenner S.E."/>
            <person name="Batalov S."/>
            <person name="Forrest A.R."/>
            <person name="Zavolan M."/>
            <person name="Davis M.J."/>
            <person name="Wilming L.G."/>
            <person name="Aidinis V."/>
            <person name="Allen J.E."/>
            <person name="Ambesi-Impiombato A."/>
            <person name="Apweiler R."/>
            <person name="Aturaliya R.N."/>
            <person name="Bailey T.L."/>
            <person name="Bansal M."/>
            <person name="Baxter L."/>
            <person name="Beisel K.W."/>
            <person name="Bersano T."/>
            <person name="Bono H."/>
            <person name="Chalk A.M."/>
            <person name="Chiu K.P."/>
            <person name="Choudhary V."/>
            <person name="Christoffels A."/>
            <person name="Clutterbuck D.R."/>
            <person name="Crowe M.L."/>
            <person name="Dalla E."/>
            <person name="Dalrymple B.P."/>
            <person name="de Bono B."/>
            <person name="Della Gatta G."/>
            <person name="di Bernardo D."/>
            <person name="Down T."/>
            <person name="Engstrom P."/>
            <person name="Fagiolini M."/>
            <person name="Faulkner G."/>
            <person name="Fletcher C.F."/>
            <person name="Fukushima T."/>
            <person name="Furuno M."/>
            <person name="Futaki S."/>
            <person name="Gariboldi M."/>
            <person name="Georgii-Hemming P."/>
            <person name="Gingeras T.R."/>
            <person name="Gojobori T."/>
            <person name="Green R.E."/>
            <person name="Gustincich S."/>
            <person name="Harbers M."/>
            <person name="Hayashi Y."/>
            <person name="Hensch T.K."/>
            <person name="Hirokawa N."/>
            <person name="Hill D."/>
            <person name="Huminiecki L."/>
            <person name="Iacono M."/>
            <person name="Ikeo K."/>
            <person name="Iwama A."/>
            <person name="Ishikawa T."/>
            <person name="Jakt M."/>
            <person name="Kanapin A."/>
            <person name="Katoh M."/>
            <person name="Kawasawa Y."/>
            <person name="Kelso J."/>
            <person name="Kitamura H."/>
            <person name="Kitano H."/>
            <person name="Kollias G."/>
            <person name="Krishnan S.P."/>
            <person name="Kruger A."/>
            <person name="Kummerfeld S.K."/>
            <person name="Kurochkin I.V."/>
            <person name="Lareau L.F."/>
            <person name="Lazarevic D."/>
            <person name="Lipovich L."/>
            <person name="Liu J."/>
            <person name="Liuni S."/>
            <person name="McWilliam S."/>
            <person name="Madan Babu M."/>
            <person name="Madera M."/>
            <person name="Marchionni L."/>
            <person name="Matsuda H."/>
            <person name="Matsuzawa S."/>
            <person name="Miki H."/>
            <person name="Mignone F."/>
            <person name="Miyake S."/>
            <person name="Morris K."/>
            <person name="Mottagui-Tabar S."/>
            <person name="Mulder N."/>
            <person name="Nakano N."/>
            <person name="Nakauchi H."/>
            <person name="Ng P."/>
            <person name="Nilsson R."/>
            <person name="Nishiguchi S."/>
            <person name="Nishikawa S."/>
            <person name="Nori F."/>
            <person name="Ohara O."/>
            <person name="Okazaki Y."/>
            <person name="Orlando V."/>
            <person name="Pang K.C."/>
            <person name="Pavan W.J."/>
            <person name="Pavesi G."/>
            <person name="Pesole G."/>
            <person name="Petrovsky N."/>
            <person name="Piazza S."/>
            <person name="Reed J."/>
            <person name="Reid J.F."/>
            <person name="Ring B.Z."/>
            <person name="Ringwald M."/>
            <person name="Rost B."/>
            <person name="Ruan Y."/>
            <person name="Salzberg S.L."/>
            <person name="Sandelin A."/>
            <person name="Schneider C."/>
            <person name="Schoenbach C."/>
            <person name="Sekiguchi K."/>
            <person name="Semple C.A."/>
            <person name="Seno S."/>
            <person name="Sessa L."/>
            <person name="Sheng Y."/>
            <person name="Shibata Y."/>
            <person name="Shimada H."/>
            <person name="Shimada K."/>
            <person name="Silva D."/>
            <person name="Sinclair B."/>
            <person name="Sperling S."/>
            <person name="Stupka E."/>
            <person name="Sugiura K."/>
            <person name="Sultana R."/>
            <person name="Takenaka Y."/>
            <person name="Taki K."/>
            <person name="Tammoja K."/>
            <person name="Tan S.L."/>
            <person name="Tang S."/>
            <person name="Taylor M.S."/>
            <person name="Tegner J."/>
            <person name="Teichmann S.A."/>
            <person name="Ueda H.R."/>
            <person name="van Nimwegen E."/>
            <person name="Verardo R."/>
            <person name="Wei C.L."/>
            <person name="Yagi K."/>
            <person name="Yamanishi H."/>
            <person name="Zabarovsky E."/>
            <person name="Zhu S."/>
            <person name="Zimmer A."/>
            <person name="Hide W."/>
            <person name="Bult C."/>
            <person name="Grimmond S.M."/>
            <person name="Teasdale R.D."/>
            <person name="Liu E.T."/>
            <person name="Brusic V."/>
            <person name="Quackenbush J."/>
            <person name="Wahlestedt C."/>
            <person name="Mattick J.S."/>
            <person name="Hume D.A."/>
            <person name="Kai C."/>
            <person name="Sasaki D."/>
            <person name="Tomaru Y."/>
            <person name="Fukuda S."/>
            <person name="Kanamori-Katayama M."/>
            <person name="Suzuki M."/>
            <person name="Aoki J."/>
            <person name="Arakawa T."/>
            <person name="Iida J."/>
            <person name="Imamura K."/>
            <person name="Itoh M."/>
            <person name="Kato T."/>
            <person name="Kawaji H."/>
            <person name="Kawagashira N."/>
            <person name="Kawashima T."/>
            <person name="Kojima M."/>
            <person name="Kondo S."/>
            <person name="Konno H."/>
            <person name="Nakano K."/>
            <person name="Ninomiya N."/>
            <person name="Nishio T."/>
            <person name="Okada M."/>
            <person name="Plessy C."/>
            <person name="Shibata K."/>
            <person name="Shiraki T."/>
            <person name="Suzuki S."/>
            <person name="Tagami M."/>
            <person name="Waki K."/>
            <person name="Watahiki A."/>
            <person name="Okamura-Oho Y."/>
            <person name="Suzuki H."/>
            <person name="Kawai J."/>
            <person name="Hayashizaki Y."/>
        </authorList>
    </citation>
    <scope>NUCLEOTIDE SEQUENCE [LARGE SCALE MRNA]</scope>
    <source>
        <strain>C57BL/6J</strain>
        <tissue>Head</tissue>
    </source>
</reference>
<reference key="2">
    <citation type="journal article" date="2004" name="Genome Res.">
        <title>The status, quality, and expansion of the NIH full-length cDNA project: the Mammalian Gene Collection (MGC).</title>
        <authorList>
            <consortium name="The MGC Project Team"/>
        </authorList>
    </citation>
    <scope>NUCLEOTIDE SEQUENCE [LARGE SCALE MRNA]</scope>
    <source>
        <tissue>Jaw</tissue>
        <tissue>Limb</tissue>
    </source>
</reference>
<protein>
    <recommendedName>
        <fullName>Protein-lysine methyltransferase METTL21E</fullName>
        <ecNumber>2.1.1.-</ecNumber>
    </recommendedName>
    <alternativeName>
        <fullName>Methyltransferase-like protein 21E</fullName>
    </alternativeName>
</protein>
<comment type="function">
    <text evidence="1">Protein-lysine methyltransferase.</text>
</comment>
<comment type="similarity">
    <text evidence="3">Belongs to the methyltransferase superfamily. METTL21 family.</text>
</comment>